<name>RLMB_PHOPR</name>
<reference key="1">
    <citation type="journal article" date="2005" name="Science">
        <title>Life at depth: Photobacterium profundum genome sequence and expression analysis.</title>
        <authorList>
            <person name="Vezzi A."/>
            <person name="Campanaro S."/>
            <person name="D'Angelo M."/>
            <person name="Simonato F."/>
            <person name="Vitulo N."/>
            <person name="Lauro F.M."/>
            <person name="Cestaro A."/>
            <person name="Malacrida G."/>
            <person name="Simionati B."/>
            <person name="Cannata N."/>
            <person name="Romualdi C."/>
            <person name="Bartlett D.H."/>
            <person name="Valle G."/>
        </authorList>
    </citation>
    <scope>NUCLEOTIDE SEQUENCE [LARGE SCALE GENOMIC DNA]</scope>
    <source>
        <strain>ATCC BAA-1253 / SS9</strain>
    </source>
</reference>
<organism>
    <name type="scientific">Photobacterium profundum (strain SS9)</name>
    <dbReference type="NCBI Taxonomy" id="298386"/>
    <lineage>
        <taxon>Bacteria</taxon>
        <taxon>Pseudomonadati</taxon>
        <taxon>Pseudomonadota</taxon>
        <taxon>Gammaproteobacteria</taxon>
        <taxon>Vibrionales</taxon>
        <taxon>Vibrionaceae</taxon>
        <taxon>Photobacterium</taxon>
    </lineage>
</organism>
<proteinExistence type="inferred from homology"/>
<gene>
    <name evidence="1" type="primary">rlmB</name>
    <name type="ordered locus">PBPRA3340</name>
</gene>
<feature type="chain" id="PRO_0000159796" description="23S rRNA (guanosine-2'-O-)-methyltransferase RlmB">
    <location>
        <begin position="1"/>
        <end position="245"/>
    </location>
</feature>
<feature type="binding site" evidence="1">
    <location>
        <position position="197"/>
    </location>
    <ligand>
        <name>S-adenosyl-L-methionine</name>
        <dbReference type="ChEBI" id="CHEBI:59789"/>
    </ligand>
</feature>
<feature type="binding site" evidence="1">
    <location>
        <position position="217"/>
    </location>
    <ligand>
        <name>S-adenosyl-L-methionine</name>
        <dbReference type="ChEBI" id="CHEBI:59789"/>
    </ligand>
</feature>
<feature type="binding site" evidence="1">
    <location>
        <position position="226"/>
    </location>
    <ligand>
        <name>S-adenosyl-L-methionine</name>
        <dbReference type="ChEBI" id="CHEBI:59789"/>
    </ligand>
</feature>
<sequence>MSNDMIFGIHAVKAVLATDPVRLIEVFVLKDRQDDRLMPLLTELKDLGITIQHAGRKALDDKAKGASHQGIIARVKPAKQLNEHDLDTILEGSENPLLLILDGVTDPHNLGACLRNADAAGAVAVIIPKDRAAQLTATASKVACGAAEVMPLVRVTNLARTMRALQDKGVWIVGTAGEATHDIYHSKLTGPLAIVMGAEGEGMRRLTRETCDDLIKIPMAGSVSSLNVSVATGICLFEAVRQRQI</sequence>
<dbReference type="EC" id="2.1.1.185" evidence="1"/>
<dbReference type="EMBL" id="CR378673">
    <property type="protein sequence ID" value="CAG21638.1"/>
    <property type="molecule type" value="Genomic_DNA"/>
</dbReference>
<dbReference type="RefSeq" id="WP_011219885.1">
    <property type="nucleotide sequence ID" value="NC_006370.1"/>
</dbReference>
<dbReference type="SMR" id="Q6LM40"/>
<dbReference type="STRING" id="298386.PBPRA3340"/>
<dbReference type="KEGG" id="ppr:PBPRA3340"/>
<dbReference type="eggNOG" id="COG0566">
    <property type="taxonomic scope" value="Bacteria"/>
</dbReference>
<dbReference type="HOGENOM" id="CLU_021322_0_1_6"/>
<dbReference type="Proteomes" id="UP000000593">
    <property type="component" value="Chromosome 1"/>
</dbReference>
<dbReference type="GO" id="GO:0005829">
    <property type="term" value="C:cytosol"/>
    <property type="evidence" value="ECO:0007669"/>
    <property type="project" value="TreeGrafter"/>
</dbReference>
<dbReference type="GO" id="GO:0003723">
    <property type="term" value="F:RNA binding"/>
    <property type="evidence" value="ECO:0007669"/>
    <property type="project" value="InterPro"/>
</dbReference>
<dbReference type="GO" id="GO:0070039">
    <property type="term" value="F:rRNA (guanosine-2'-O-)-methyltransferase activity"/>
    <property type="evidence" value="ECO:0007669"/>
    <property type="project" value="UniProtKB-UniRule"/>
</dbReference>
<dbReference type="CDD" id="cd18103">
    <property type="entry name" value="SpoU-like_RlmB"/>
    <property type="match status" value="1"/>
</dbReference>
<dbReference type="FunFam" id="3.40.1280.10:FF:000005">
    <property type="entry name" value="23S rRNA (guanosine-2'-O-)-methyltransferase RlmB"/>
    <property type="match status" value="1"/>
</dbReference>
<dbReference type="Gene3D" id="3.30.1330.30">
    <property type="match status" value="1"/>
</dbReference>
<dbReference type="Gene3D" id="3.40.1280.10">
    <property type="match status" value="1"/>
</dbReference>
<dbReference type="HAMAP" id="MF_01887">
    <property type="entry name" value="23SrRNA_methyltr_B"/>
    <property type="match status" value="1"/>
</dbReference>
<dbReference type="InterPro" id="IPR024915">
    <property type="entry name" value="23S_rRNA_MeTrfase_RlmB"/>
</dbReference>
<dbReference type="InterPro" id="IPR029028">
    <property type="entry name" value="Alpha/beta_knot_MTases"/>
</dbReference>
<dbReference type="InterPro" id="IPR029064">
    <property type="entry name" value="Ribosomal_eL30-like_sf"/>
</dbReference>
<dbReference type="InterPro" id="IPR004441">
    <property type="entry name" value="rRNA_MeTrfase_TrmH"/>
</dbReference>
<dbReference type="InterPro" id="IPR001537">
    <property type="entry name" value="SpoU_MeTrfase"/>
</dbReference>
<dbReference type="InterPro" id="IPR013123">
    <property type="entry name" value="SpoU_subst-bd"/>
</dbReference>
<dbReference type="InterPro" id="IPR029026">
    <property type="entry name" value="tRNA_m1G_MTases_N"/>
</dbReference>
<dbReference type="NCBIfam" id="NF008386">
    <property type="entry name" value="PRK11181.1"/>
    <property type="match status" value="1"/>
</dbReference>
<dbReference type="NCBIfam" id="TIGR00186">
    <property type="entry name" value="rRNA_methyl_3"/>
    <property type="match status" value="1"/>
</dbReference>
<dbReference type="PANTHER" id="PTHR46429">
    <property type="entry name" value="23S RRNA (GUANOSINE-2'-O-)-METHYLTRANSFERASE RLMB"/>
    <property type="match status" value="1"/>
</dbReference>
<dbReference type="PANTHER" id="PTHR46429:SF1">
    <property type="entry name" value="23S RRNA (GUANOSINE-2'-O-)-METHYLTRANSFERASE RLMB"/>
    <property type="match status" value="1"/>
</dbReference>
<dbReference type="Pfam" id="PF00588">
    <property type="entry name" value="SpoU_methylase"/>
    <property type="match status" value="1"/>
</dbReference>
<dbReference type="Pfam" id="PF08032">
    <property type="entry name" value="SpoU_sub_bind"/>
    <property type="match status" value="1"/>
</dbReference>
<dbReference type="SMART" id="SM00967">
    <property type="entry name" value="SpoU_sub_bind"/>
    <property type="match status" value="1"/>
</dbReference>
<dbReference type="SUPFAM" id="SSF75217">
    <property type="entry name" value="alpha/beta knot"/>
    <property type="match status" value="1"/>
</dbReference>
<dbReference type="SUPFAM" id="SSF55315">
    <property type="entry name" value="L30e-like"/>
    <property type="match status" value="1"/>
</dbReference>
<keyword id="KW-0963">Cytoplasm</keyword>
<keyword id="KW-0489">Methyltransferase</keyword>
<keyword id="KW-1185">Reference proteome</keyword>
<keyword id="KW-0698">rRNA processing</keyword>
<keyword id="KW-0949">S-adenosyl-L-methionine</keyword>
<keyword id="KW-0808">Transferase</keyword>
<accession>Q6LM40</accession>
<protein>
    <recommendedName>
        <fullName evidence="1">23S rRNA (guanosine-2'-O-)-methyltransferase RlmB</fullName>
        <ecNumber evidence="1">2.1.1.185</ecNumber>
    </recommendedName>
    <alternativeName>
        <fullName evidence="1">23S rRNA (guanosine2251 2'-O)-methyltransferase</fullName>
    </alternativeName>
    <alternativeName>
        <fullName evidence="1">23S rRNA Gm2251 2'-O-methyltransferase</fullName>
    </alternativeName>
</protein>
<evidence type="ECO:0000255" key="1">
    <source>
        <dbReference type="HAMAP-Rule" id="MF_01887"/>
    </source>
</evidence>
<comment type="function">
    <text evidence="1">Specifically methylates the ribose of guanosine 2251 in 23S rRNA.</text>
</comment>
<comment type="catalytic activity">
    <reaction evidence="1">
        <text>guanosine(2251) in 23S rRNA + S-adenosyl-L-methionine = 2'-O-methylguanosine(2251) in 23S rRNA + S-adenosyl-L-homocysteine + H(+)</text>
        <dbReference type="Rhea" id="RHEA:24140"/>
        <dbReference type="Rhea" id="RHEA-COMP:10239"/>
        <dbReference type="Rhea" id="RHEA-COMP:10241"/>
        <dbReference type="ChEBI" id="CHEBI:15378"/>
        <dbReference type="ChEBI" id="CHEBI:57856"/>
        <dbReference type="ChEBI" id="CHEBI:59789"/>
        <dbReference type="ChEBI" id="CHEBI:74269"/>
        <dbReference type="ChEBI" id="CHEBI:74445"/>
        <dbReference type="EC" id="2.1.1.185"/>
    </reaction>
</comment>
<comment type="subcellular location">
    <subcellularLocation>
        <location evidence="1">Cytoplasm</location>
    </subcellularLocation>
</comment>
<comment type="similarity">
    <text evidence="1">Belongs to the class IV-like SAM-binding methyltransferase superfamily. RNA methyltransferase TrmH family. RlmB subfamily.</text>
</comment>